<keyword id="KW-0067">ATP-binding</keyword>
<keyword id="KW-0963">Cytoplasm</keyword>
<keyword id="KW-0227">DNA damage</keyword>
<keyword id="KW-0228">DNA excision</keyword>
<keyword id="KW-0234">DNA repair</keyword>
<keyword id="KW-0267">Excision nuclease</keyword>
<keyword id="KW-0547">Nucleotide-binding</keyword>
<keyword id="KW-0742">SOS response</keyword>
<comment type="function">
    <text evidence="1">The UvrABC repair system catalyzes the recognition and processing of DNA lesions. A damage recognition complex composed of 2 UvrA and 2 UvrB subunits scans DNA for abnormalities. Upon binding of the UvrA(2)B(2) complex to a putative damaged site, the DNA wraps around one UvrB monomer. DNA wrap is dependent on ATP binding by UvrB and probably causes local melting of the DNA helix, facilitating insertion of UvrB beta-hairpin between the DNA strands. Then UvrB probes one DNA strand for the presence of a lesion. If a lesion is found the UvrA subunits dissociate and the UvrB-DNA preincision complex is formed. This complex is subsequently bound by UvrC and the second UvrB is released. If no lesion is found, the DNA wraps around the other UvrB subunit that will check the other stand for damage.</text>
</comment>
<comment type="subunit">
    <text evidence="1">Forms a heterotetramer with UvrA during the search for lesions. Interacts with UvrC in an incision complex.</text>
</comment>
<comment type="subcellular location">
    <subcellularLocation>
        <location evidence="1">Cytoplasm</location>
    </subcellularLocation>
</comment>
<comment type="domain">
    <text evidence="1">The beta-hairpin motif is involved in DNA binding.</text>
</comment>
<comment type="similarity">
    <text evidence="1">Belongs to the UvrB family.</text>
</comment>
<sequence length="690" mass="78103">MSETNTGTPVVTFEGSPYRLHQPFPPAGDQPEAIRQLVEGLDDGLSFQTLLGVTGSGKTYTMANVIARTGRPALVLAPNKTLAAQLYSEFKEFFPENSVEYFVSYYDYYQPEAYVPSRDLFIEKDSSINDHIEQMRLSATKSLIERRDVVIVATVSCIYGIGDRDEYHNMILTMRVGDKLDQRAIVKRLTDMQYERNEMDFHRGTFRVRGDIIDIFPAEHAEHAIRISLFDDEVEGMQFFDPLTGHLLHKALRFTVFPASHYVTPRATVLRAVEAIKDELRERIDFFTRNNKLVEAQRIEQRTRFDLEMLDQIGFCKGIENYSRHFSGRKAGESPPTLIDYLPPDALMFIDESHVSIGQVGGMYKGDRSRKENLVDYGFRLPSALDNRPLQFNEFEAHMRQTIFVSATPADYEQQHAGQVVEQVARPTGLIDPEVIVRPASTQVDDLLAEIGKRIAVGERVLVTTLTKRMSEDLTDFLADNGIKVRYLHSDIDTVERVEIIRDLRLGEFDVLVGINLLREGLDIPEVSLVAILDADKEGFLRSERSLIQTIGRAARHIHGTAILYADTVTQSMQRAIAETGRRREKQIAFNLEHGITPRGVSKKIKDIIDGVYDAGSAQTELKAAQQRAAYDAMDEKAVAREIKRLEKSMMECAKNLEFEKAAAARDDLFRLRERVFGAAQHDLDGDGTK</sequence>
<feature type="chain" id="PRO_0000227307" description="UvrABC system protein B">
    <location>
        <begin position="1"/>
        <end position="690"/>
    </location>
</feature>
<feature type="domain" description="Helicase ATP-binding" evidence="1">
    <location>
        <begin position="39"/>
        <end position="422"/>
    </location>
</feature>
<feature type="domain" description="Helicase C-terminal" evidence="1">
    <location>
        <begin position="443"/>
        <end position="596"/>
    </location>
</feature>
<feature type="domain" description="UVR" evidence="1">
    <location>
        <begin position="640"/>
        <end position="675"/>
    </location>
</feature>
<feature type="short sequence motif" description="Beta-hairpin">
    <location>
        <begin position="105"/>
        <end position="128"/>
    </location>
</feature>
<feature type="binding site" evidence="1">
    <location>
        <begin position="52"/>
        <end position="59"/>
    </location>
    <ligand>
        <name>ATP</name>
        <dbReference type="ChEBI" id="CHEBI:30616"/>
    </ligand>
</feature>
<gene>
    <name evidence="1" type="primary">uvrB</name>
    <name type="ordered locus">Daro_2003</name>
</gene>
<organism>
    <name type="scientific">Dechloromonas aromatica (strain RCB)</name>
    <dbReference type="NCBI Taxonomy" id="159087"/>
    <lineage>
        <taxon>Bacteria</taxon>
        <taxon>Pseudomonadati</taxon>
        <taxon>Pseudomonadota</taxon>
        <taxon>Betaproteobacteria</taxon>
        <taxon>Rhodocyclales</taxon>
        <taxon>Azonexaceae</taxon>
        <taxon>Dechloromonas</taxon>
    </lineage>
</organism>
<evidence type="ECO:0000255" key="1">
    <source>
        <dbReference type="HAMAP-Rule" id="MF_00204"/>
    </source>
</evidence>
<proteinExistence type="inferred from homology"/>
<protein>
    <recommendedName>
        <fullName evidence="1">UvrABC system protein B</fullName>
        <shortName evidence="1">Protein UvrB</shortName>
    </recommendedName>
    <alternativeName>
        <fullName evidence="1">Excinuclease ABC subunit B</fullName>
    </alternativeName>
</protein>
<name>UVRB_DECAR</name>
<reference key="1">
    <citation type="journal article" date="2009" name="BMC Genomics">
        <title>Metabolic analysis of the soil microbe Dechloromonas aromatica str. RCB: indications of a surprisingly complex life-style and cryptic anaerobic pathways for aromatic degradation.</title>
        <authorList>
            <person name="Salinero K.K."/>
            <person name="Keller K."/>
            <person name="Feil W.S."/>
            <person name="Feil H."/>
            <person name="Trong S."/>
            <person name="Di Bartolo G."/>
            <person name="Lapidus A."/>
        </authorList>
    </citation>
    <scope>NUCLEOTIDE SEQUENCE [LARGE SCALE GENOMIC DNA]</scope>
    <source>
        <strain>RCB</strain>
    </source>
</reference>
<dbReference type="EMBL" id="CP000089">
    <property type="protein sequence ID" value="AAZ46749.1"/>
    <property type="molecule type" value="Genomic_DNA"/>
</dbReference>
<dbReference type="SMR" id="Q47EI2"/>
<dbReference type="STRING" id="159087.Daro_2003"/>
<dbReference type="KEGG" id="dar:Daro_2003"/>
<dbReference type="eggNOG" id="COG0556">
    <property type="taxonomic scope" value="Bacteria"/>
</dbReference>
<dbReference type="HOGENOM" id="CLU_009621_2_1_4"/>
<dbReference type="OrthoDB" id="9806651at2"/>
<dbReference type="GO" id="GO:0005737">
    <property type="term" value="C:cytoplasm"/>
    <property type="evidence" value="ECO:0007669"/>
    <property type="project" value="UniProtKB-SubCell"/>
</dbReference>
<dbReference type="GO" id="GO:0009380">
    <property type="term" value="C:excinuclease repair complex"/>
    <property type="evidence" value="ECO:0007669"/>
    <property type="project" value="InterPro"/>
</dbReference>
<dbReference type="GO" id="GO:0005524">
    <property type="term" value="F:ATP binding"/>
    <property type="evidence" value="ECO:0007669"/>
    <property type="project" value="UniProtKB-UniRule"/>
</dbReference>
<dbReference type="GO" id="GO:0016887">
    <property type="term" value="F:ATP hydrolysis activity"/>
    <property type="evidence" value="ECO:0007669"/>
    <property type="project" value="InterPro"/>
</dbReference>
<dbReference type="GO" id="GO:0003677">
    <property type="term" value="F:DNA binding"/>
    <property type="evidence" value="ECO:0007669"/>
    <property type="project" value="UniProtKB-UniRule"/>
</dbReference>
<dbReference type="GO" id="GO:0009381">
    <property type="term" value="F:excinuclease ABC activity"/>
    <property type="evidence" value="ECO:0007669"/>
    <property type="project" value="UniProtKB-UniRule"/>
</dbReference>
<dbReference type="GO" id="GO:0006289">
    <property type="term" value="P:nucleotide-excision repair"/>
    <property type="evidence" value="ECO:0007669"/>
    <property type="project" value="UniProtKB-UniRule"/>
</dbReference>
<dbReference type="GO" id="GO:0009432">
    <property type="term" value="P:SOS response"/>
    <property type="evidence" value="ECO:0007669"/>
    <property type="project" value="UniProtKB-UniRule"/>
</dbReference>
<dbReference type="CDD" id="cd17916">
    <property type="entry name" value="DEXHc_UvrB"/>
    <property type="match status" value="1"/>
</dbReference>
<dbReference type="CDD" id="cd18790">
    <property type="entry name" value="SF2_C_UvrB"/>
    <property type="match status" value="1"/>
</dbReference>
<dbReference type="Gene3D" id="6.10.140.240">
    <property type="match status" value="1"/>
</dbReference>
<dbReference type="Gene3D" id="3.40.50.300">
    <property type="entry name" value="P-loop containing nucleotide triphosphate hydrolases"/>
    <property type="match status" value="3"/>
</dbReference>
<dbReference type="Gene3D" id="4.10.860.10">
    <property type="entry name" value="UVR domain"/>
    <property type="match status" value="1"/>
</dbReference>
<dbReference type="HAMAP" id="MF_00204">
    <property type="entry name" value="UvrB"/>
    <property type="match status" value="1"/>
</dbReference>
<dbReference type="InterPro" id="IPR006935">
    <property type="entry name" value="Helicase/UvrB_N"/>
</dbReference>
<dbReference type="InterPro" id="IPR014001">
    <property type="entry name" value="Helicase_ATP-bd"/>
</dbReference>
<dbReference type="InterPro" id="IPR001650">
    <property type="entry name" value="Helicase_C-like"/>
</dbReference>
<dbReference type="InterPro" id="IPR027417">
    <property type="entry name" value="P-loop_NTPase"/>
</dbReference>
<dbReference type="InterPro" id="IPR001943">
    <property type="entry name" value="UVR_dom"/>
</dbReference>
<dbReference type="InterPro" id="IPR036876">
    <property type="entry name" value="UVR_dom_sf"/>
</dbReference>
<dbReference type="InterPro" id="IPR004807">
    <property type="entry name" value="UvrB"/>
</dbReference>
<dbReference type="InterPro" id="IPR041471">
    <property type="entry name" value="UvrB_inter"/>
</dbReference>
<dbReference type="InterPro" id="IPR024759">
    <property type="entry name" value="UvrB_YAD/RRR_dom"/>
</dbReference>
<dbReference type="NCBIfam" id="NF003673">
    <property type="entry name" value="PRK05298.1"/>
    <property type="match status" value="1"/>
</dbReference>
<dbReference type="NCBIfam" id="TIGR00631">
    <property type="entry name" value="uvrb"/>
    <property type="match status" value="1"/>
</dbReference>
<dbReference type="PANTHER" id="PTHR24029">
    <property type="entry name" value="UVRABC SYSTEM PROTEIN B"/>
    <property type="match status" value="1"/>
</dbReference>
<dbReference type="PANTHER" id="PTHR24029:SF0">
    <property type="entry name" value="UVRABC SYSTEM PROTEIN B"/>
    <property type="match status" value="1"/>
</dbReference>
<dbReference type="Pfam" id="PF00271">
    <property type="entry name" value="Helicase_C"/>
    <property type="match status" value="1"/>
</dbReference>
<dbReference type="Pfam" id="PF04851">
    <property type="entry name" value="ResIII"/>
    <property type="match status" value="1"/>
</dbReference>
<dbReference type="Pfam" id="PF02151">
    <property type="entry name" value="UVR"/>
    <property type="match status" value="1"/>
</dbReference>
<dbReference type="Pfam" id="PF12344">
    <property type="entry name" value="UvrB"/>
    <property type="match status" value="1"/>
</dbReference>
<dbReference type="Pfam" id="PF17757">
    <property type="entry name" value="UvrB_inter"/>
    <property type="match status" value="1"/>
</dbReference>
<dbReference type="SMART" id="SM00487">
    <property type="entry name" value="DEXDc"/>
    <property type="match status" value="1"/>
</dbReference>
<dbReference type="SMART" id="SM00490">
    <property type="entry name" value="HELICc"/>
    <property type="match status" value="1"/>
</dbReference>
<dbReference type="SUPFAM" id="SSF46600">
    <property type="entry name" value="C-terminal UvrC-binding domain of UvrB"/>
    <property type="match status" value="1"/>
</dbReference>
<dbReference type="SUPFAM" id="SSF52540">
    <property type="entry name" value="P-loop containing nucleoside triphosphate hydrolases"/>
    <property type="match status" value="2"/>
</dbReference>
<dbReference type="PROSITE" id="PS51192">
    <property type="entry name" value="HELICASE_ATP_BIND_1"/>
    <property type="match status" value="1"/>
</dbReference>
<dbReference type="PROSITE" id="PS51194">
    <property type="entry name" value="HELICASE_CTER"/>
    <property type="match status" value="1"/>
</dbReference>
<dbReference type="PROSITE" id="PS50151">
    <property type="entry name" value="UVR"/>
    <property type="match status" value="1"/>
</dbReference>
<accession>Q47EI2</accession>